<protein>
    <recommendedName>
        <fullName evidence="1">Orotate phosphoribosyltransferase</fullName>
        <shortName evidence="1">OPRT</shortName>
        <shortName evidence="1">OPRTase</shortName>
        <ecNumber evidence="1">2.4.2.10</ecNumber>
    </recommendedName>
</protein>
<dbReference type="EC" id="2.4.2.10" evidence="1"/>
<dbReference type="EMBL" id="CP000133">
    <property type="protein sequence ID" value="ABC89295.1"/>
    <property type="molecule type" value="Genomic_DNA"/>
</dbReference>
<dbReference type="RefSeq" id="WP_011423852.1">
    <property type="nucleotide sequence ID" value="NC_007761.1"/>
</dbReference>
<dbReference type="SMR" id="Q2KCZ1"/>
<dbReference type="KEGG" id="ret:RHE_CH00474"/>
<dbReference type="eggNOG" id="COG0461">
    <property type="taxonomic scope" value="Bacteria"/>
</dbReference>
<dbReference type="HOGENOM" id="CLU_074878_1_0_5"/>
<dbReference type="OrthoDB" id="9802134at2"/>
<dbReference type="UniPathway" id="UPA00070">
    <property type="reaction ID" value="UER00119"/>
</dbReference>
<dbReference type="Proteomes" id="UP000001936">
    <property type="component" value="Chromosome"/>
</dbReference>
<dbReference type="GO" id="GO:0000287">
    <property type="term" value="F:magnesium ion binding"/>
    <property type="evidence" value="ECO:0007669"/>
    <property type="project" value="UniProtKB-UniRule"/>
</dbReference>
<dbReference type="GO" id="GO:0004588">
    <property type="term" value="F:orotate phosphoribosyltransferase activity"/>
    <property type="evidence" value="ECO:0007669"/>
    <property type="project" value="UniProtKB-UniRule"/>
</dbReference>
<dbReference type="GO" id="GO:0044205">
    <property type="term" value="P:'de novo' UMP biosynthetic process"/>
    <property type="evidence" value="ECO:0007669"/>
    <property type="project" value="UniProtKB-UniRule"/>
</dbReference>
<dbReference type="GO" id="GO:0019856">
    <property type="term" value="P:pyrimidine nucleobase biosynthetic process"/>
    <property type="evidence" value="ECO:0007669"/>
    <property type="project" value="TreeGrafter"/>
</dbReference>
<dbReference type="CDD" id="cd06223">
    <property type="entry name" value="PRTases_typeI"/>
    <property type="match status" value="1"/>
</dbReference>
<dbReference type="Gene3D" id="3.40.50.2020">
    <property type="match status" value="1"/>
</dbReference>
<dbReference type="HAMAP" id="MF_01208">
    <property type="entry name" value="PyrE"/>
    <property type="match status" value="1"/>
</dbReference>
<dbReference type="InterPro" id="IPR023031">
    <property type="entry name" value="OPRT"/>
</dbReference>
<dbReference type="InterPro" id="IPR004467">
    <property type="entry name" value="Or_phspho_trans_dom"/>
</dbReference>
<dbReference type="InterPro" id="IPR000836">
    <property type="entry name" value="PRibTrfase_dom"/>
</dbReference>
<dbReference type="InterPro" id="IPR029057">
    <property type="entry name" value="PRTase-like"/>
</dbReference>
<dbReference type="NCBIfam" id="NF001729">
    <property type="entry name" value="PRK00455.1-3"/>
    <property type="match status" value="1"/>
</dbReference>
<dbReference type="NCBIfam" id="TIGR00336">
    <property type="entry name" value="pyrE"/>
    <property type="match status" value="1"/>
</dbReference>
<dbReference type="PANTHER" id="PTHR19278">
    <property type="entry name" value="OROTATE PHOSPHORIBOSYLTRANSFERASE"/>
    <property type="match status" value="1"/>
</dbReference>
<dbReference type="PANTHER" id="PTHR19278:SF9">
    <property type="entry name" value="URIDINE 5'-MONOPHOSPHATE SYNTHASE"/>
    <property type="match status" value="1"/>
</dbReference>
<dbReference type="Pfam" id="PF00156">
    <property type="entry name" value="Pribosyltran"/>
    <property type="match status" value="1"/>
</dbReference>
<dbReference type="SUPFAM" id="SSF53271">
    <property type="entry name" value="PRTase-like"/>
    <property type="match status" value="1"/>
</dbReference>
<gene>
    <name evidence="1" type="primary">pyrE</name>
    <name type="ordered locus">RHE_CH00474</name>
</gene>
<accession>Q2KCZ1</accession>
<reference key="1">
    <citation type="journal article" date="2006" name="Proc. Natl. Acad. Sci. U.S.A.">
        <title>The partitioned Rhizobium etli genome: genetic and metabolic redundancy in seven interacting replicons.</title>
        <authorList>
            <person name="Gonzalez V."/>
            <person name="Santamaria R.I."/>
            <person name="Bustos P."/>
            <person name="Hernandez-Gonzalez I."/>
            <person name="Medrano-Soto A."/>
            <person name="Moreno-Hagelsieb G."/>
            <person name="Janga S.C."/>
            <person name="Ramirez M.A."/>
            <person name="Jimenez-Jacinto V."/>
            <person name="Collado-Vides J."/>
            <person name="Davila G."/>
        </authorList>
    </citation>
    <scope>NUCLEOTIDE SEQUENCE [LARGE SCALE GENOMIC DNA]</scope>
    <source>
        <strain>ATCC 51251 / DSM 11541 / JCM 21823 / NBRC 15573 / CFN 42</strain>
    </source>
</reference>
<comment type="function">
    <text evidence="1">Catalyzes the transfer of a ribosyl phosphate group from 5-phosphoribose 1-diphosphate to orotate, leading to the formation of orotidine monophosphate (OMP).</text>
</comment>
<comment type="catalytic activity">
    <reaction evidence="1">
        <text>orotidine 5'-phosphate + diphosphate = orotate + 5-phospho-alpha-D-ribose 1-diphosphate</text>
        <dbReference type="Rhea" id="RHEA:10380"/>
        <dbReference type="ChEBI" id="CHEBI:30839"/>
        <dbReference type="ChEBI" id="CHEBI:33019"/>
        <dbReference type="ChEBI" id="CHEBI:57538"/>
        <dbReference type="ChEBI" id="CHEBI:58017"/>
        <dbReference type="EC" id="2.4.2.10"/>
    </reaction>
</comment>
<comment type="cofactor">
    <cofactor evidence="1">
        <name>Mg(2+)</name>
        <dbReference type="ChEBI" id="CHEBI:18420"/>
    </cofactor>
</comment>
<comment type="pathway">
    <text evidence="1">Pyrimidine metabolism; UMP biosynthesis via de novo pathway; UMP from orotate: step 1/2.</text>
</comment>
<comment type="subunit">
    <text evidence="1">Homodimer.</text>
</comment>
<comment type="similarity">
    <text evidence="1">Belongs to the purine/pyrimidine phosphoribosyltransferase family. PyrE subfamily.</text>
</comment>
<name>PYRE_RHIEC</name>
<feature type="chain" id="PRO_1000066280" description="Orotate phosphoribosyltransferase">
    <location>
        <begin position="1"/>
        <end position="229"/>
    </location>
</feature>
<feature type="binding site" evidence="1">
    <location>
        <position position="107"/>
    </location>
    <ligand>
        <name>5-phospho-alpha-D-ribose 1-diphosphate</name>
        <dbReference type="ChEBI" id="CHEBI:58017"/>
        <note>ligand shared between dimeric partners</note>
    </ligand>
</feature>
<feature type="binding site" description="in other chain" evidence="1">
    <location>
        <position position="108"/>
    </location>
    <ligand>
        <name>5-phospho-alpha-D-ribose 1-diphosphate</name>
        <dbReference type="ChEBI" id="CHEBI:58017"/>
        <note>ligand shared between dimeric partners</note>
    </ligand>
</feature>
<feature type="binding site" evidence="1">
    <location>
        <position position="111"/>
    </location>
    <ligand>
        <name>5-phospho-alpha-D-ribose 1-diphosphate</name>
        <dbReference type="ChEBI" id="CHEBI:58017"/>
        <note>ligand shared between dimeric partners</note>
    </ligand>
</feature>
<feature type="binding site" evidence="1">
    <location>
        <position position="113"/>
    </location>
    <ligand>
        <name>5-phospho-alpha-D-ribose 1-diphosphate</name>
        <dbReference type="ChEBI" id="CHEBI:58017"/>
        <note>ligand shared between dimeric partners</note>
    </ligand>
</feature>
<feature type="binding site" description="in other chain" evidence="1">
    <location>
        <begin position="133"/>
        <end position="141"/>
    </location>
    <ligand>
        <name>5-phospho-alpha-D-ribose 1-diphosphate</name>
        <dbReference type="ChEBI" id="CHEBI:58017"/>
        <note>ligand shared between dimeric partners</note>
    </ligand>
</feature>
<feature type="binding site" evidence="1">
    <location>
        <position position="137"/>
    </location>
    <ligand>
        <name>orotate</name>
        <dbReference type="ChEBI" id="CHEBI:30839"/>
    </ligand>
</feature>
<organism>
    <name type="scientific">Rhizobium etli (strain ATCC 51251 / DSM 11541 / JCM 21823 / NBRC 15573 / CFN 42)</name>
    <dbReference type="NCBI Taxonomy" id="347834"/>
    <lineage>
        <taxon>Bacteria</taxon>
        <taxon>Pseudomonadati</taxon>
        <taxon>Pseudomonadota</taxon>
        <taxon>Alphaproteobacteria</taxon>
        <taxon>Hyphomicrobiales</taxon>
        <taxon>Rhizobiaceae</taxon>
        <taxon>Rhizobium/Agrobacterium group</taxon>
        <taxon>Rhizobium</taxon>
    </lineage>
</organism>
<sequence length="229" mass="25137">MIQTTFPDRALMAELVAKMLWEIKAVHFNAAQPYKLSSGMASPVYIDCRKLLSYPRIRSTVMDFAASTLLRDAGFEQFDCIAGGETAGIPFAALLADRLGLPMIYVRKQPKGHGRNAQIEGNMPEGSRVLVIEDLTTAGGSMFKFIDAVRAAGGIVDHGIALFFYDIFGQQRFTDGKVRLHHIATWRNVLAVARAQQLFDDKTLAEVEAFLDAPLAWSGRNGGVSELSL</sequence>
<evidence type="ECO:0000255" key="1">
    <source>
        <dbReference type="HAMAP-Rule" id="MF_01208"/>
    </source>
</evidence>
<proteinExistence type="inferred from homology"/>
<keyword id="KW-0328">Glycosyltransferase</keyword>
<keyword id="KW-0460">Magnesium</keyword>
<keyword id="KW-0665">Pyrimidine biosynthesis</keyword>
<keyword id="KW-1185">Reference proteome</keyword>
<keyword id="KW-0808">Transferase</keyword>